<dbReference type="EMBL" id="CP001182">
    <property type="protein sequence ID" value="ACJ39891.1"/>
    <property type="molecule type" value="Genomic_DNA"/>
</dbReference>
<dbReference type="RefSeq" id="WP_001224256.1">
    <property type="nucleotide sequence ID" value="NC_011586.2"/>
</dbReference>
<dbReference type="SMR" id="B7I4B6"/>
<dbReference type="KEGG" id="abn:AB57_0468"/>
<dbReference type="HOGENOM" id="CLU_114306_2_1_6"/>
<dbReference type="Proteomes" id="UP000007094">
    <property type="component" value="Chromosome"/>
</dbReference>
<dbReference type="GO" id="GO:1990904">
    <property type="term" value="C:ribonucleoprotein complex"/>
    <property type="evidence" value="ECO:0007669"/>
    <property type="project" value="UniProtKB-KW"/>
</dbReference>
<dbReference type="GO" id="GO:0005840">
    <property type="term" value="C:ribosome"/>
    <property type="evidence" value="ECO:0007669"/>
    <property type="project" value="UniProtKB-KW"/>
</dbReference>
<dbReference type="GO" id="GO:0003735">
    <property type="term" value="F:structural constituent of ribosome"/>
    <property type="evidence" value="ECO:0007669"/>
    <property type="project" value="InterPro"/>
</dbReference>
<dbReference type="GO" id="GO:0006412">
    <property type="term" value="P:translation"/>
    <property type="evidence" value="ECO:0007669"/>
    <property type="project" value="UniProtKB-UniRule"/>
</dbReference>
<dbReference type="Gene3D" id="4.10.830.30">
    <property type="entry name" value="Ribosomal protein L31"/>
    <property type="match status" value="1"/>
</dbReference>
<dbReference type="HAMAP" id="MF_00502">
    <property type="entry name" value="Ribosomal_bL31_2"/>
    <property type="match status" value="1"/>
</dbReference>
<dbReference type="InterPro" id="IPR034704">
    <property type="entry name" value="Ribosomal_bL28/bL31-like_sf"/>
</dbReference>
<dbReference type="InterPro" id="IPR002150">
    <property type="entry name" value="Ribosomal_bL31"/>
</dbReference>
<dbReference type="InterPro" id="IPR027493">
    <property type="entry name" value="Ribosomal_bL31_B"/>
</dbReference>
<dbReference type="InterPro" id="IPR042105">
    <property type="entry name" value="Ribosomal_bL31_sf"/>
</dbReference>
<dbReference type="NCBIfam" id="TIGR00105">
    <property type="entry name" value="L31"/>
    <property type="match status" value="1"/>
</dbReference>
<dbReference type="NCBIfam" id="NF002462">
    <property type="entry name" value="PRK01678.1"/>
    <property type="match status" value="1"/>
</dbReference>
<dbReference type="PANTHER" id="PTHR33280">
    <property type="entry name" value="50S RIBOSOMAL PROTEIN L31, CHLOROPLASTIC"/>
    <property type="match status" value="1"/>
</dbReference>
<dbReference type="PANTHER" id="PTHR33280:SF1">
    <property type="entry name" value="LARGE RIBOSOMAL SUBUNIT PROTEIN BL31C"/>
    <property type="match status" value="1"/>
</dbReference>
<dbReference type="Pfam" id="PF01197">
    <property type="entry name" value="Ribosomal_L31"/>
    <property type="match status" value="1"/>
</dbReference>
<dbReference type="PRINTS" id="PR01249">
    <property type="entry name" value="RIBOSOMALL31"/>
</dbReference>
<dbReference type="SUPFAM" id="SSF143800">
    <property type="entry name" value="L28p-like"/>
    <property type="match status" value="1"/>
</dbReference>
<dbReference type="PROSITE" id="PS01143">
    <property type="entry name" value="RIBOSOMAL_L31"/>
    <property type="match status" value="1"/>
</dbReference>
<feature type="chain" id="PRO_1000126775" description="Large ribosomal subunit protein bL31B">
    <location>
        <begin position="1"/>
        <end position="84"/>
    </location>
</feature>
<protein>
    <recommendedName>
        <fullName evidence="1">Large ribosomal subunit protein bL31B</fullName>
    </recommendedName>
    <alternativeName>
        <fullName evidence="2">50S ribosomal protein L31 type B</fullName>
    </alternativeName>
</protein>
<comment type="subunit">
    <text evidence="1">Part of the 50S ribosomal subunit.</text>
</comment>
<comment type="similarity">
    <text evidence="1">Belongs to the bacterial ribosomal protein bL31 family. Type B subfamily.</text>
</comment>
<proteinExistence type="inferred from homology"/>
<gene>
    <name evidence="1" type="primary">rpmE2</name>
    <name type="ordered locus">AB57_0468</name>
</gene>
<name>RL31B_ACIB5</name>
<accession>B7I4B6</accession>
<sequence>MRKDIHPAYQQVLFHDTNADVYFLIGSTIQTKQTKEYQGQVYPYVTLDISSASHPFYTGEVRQASNEGRVASFNKRFARFNRKS</sequence>
<evidence type="ECO:0000255" key="1">
    <source>
        <dbReference type="HAMAP-Rule" id="MF_00502"/>
    </source>
</evidence>
<evidence type="ECO:0000305" key="2"/>
<organism>
    <name type="scientific">Acinetobacter baumannii (strain AB0057)</name>
    <dbReference type="NCBI Taxonomy" id="480119"/>
    <lineage>
        <taxon>Bacteria</taxon>
        <taxon>Pseudomonadati</taxon>
        <taxon>Pseudomonadota</taxon>
        <taxon>Gammaproteobacteria</taxon>
        <taxon>Moraxellales</taxon>
        <taxon>Moraxellaceae</taxon>
        <taxon>Acinetobacter</taxon>
        <taxon>Acinetobacter calcoaceticus/baumannii complex</taxon>
    </lineage>
</organism>
<keyword id="KW-0687">Ribonucleoprotein</keyword>
<keyword id="KW-0689">Ribosomal protein</keyword>
<reference key="1">
    <citation type="journal article" date="2008" name="J. Bacteriol.">
        <title>Comparative genome sequence analysis of multidrug-resistant Acinetobacter baumannii.</title>
        <authorList>
            <person name="Adams M.D."/>
            <person name="Goglin K."/>
            <person name="Molyneaux N."/>
            <person name="Hujer K.M."/>
            <person name="Lavender H."/>
            <person name="Jamison J.J."/>
            <person name="MacDonald I.J."/>
            <person name="Martin K.M."/>
            <person name="Russo T."/>
            <person name="Campagnari A.A."/>
            <person name="Hujer A.M."/>
            <person name="Bonomo R.A."/>
            <person name="Gill S.R."/>
        </authorList>
    </citation>
    <scope>NUCLEOTIDE SEQUENCE [LARGE SCALE GENOMIC DNA]</scope>
    <source>
        <strain>AB0057</strain>
    </source>
</reference>